<reference key="1">
    <citation type="journal article" date="2002" name="Proc. Natl. Acad. Sci. U.S.A.">
        <title>Genome sequence of Streptococcus mutans UA159, a cariogenic dental pathogen.</title>
        <authorList>
            <person name="Ajdic D.J."/>
            <person name="McShan W.M."/>
            <person name="McLaughlin R.E."/>
            <person name="Savic G."/>
            <person name="Chang J."/>
            <person name="Carson M.B."/>
            <person name="Primeaux C."/>
            <person name="Tian R."/>
            <person name="Kenton S."/>
            <person name="Jia H.G."/>
            <person name="Lin S.P."/>
            <person name="Qian Y."/>
            <person name="Li S."/>
            <person name="Zhu H."/>
            <person name="Najar F.Z."/>
            <person name="Lai H."/>
            <person name="White J."/>
            <person name="Roe B.A."/>
            <person name="Ferretti J.J."/>
        </authorList>
    </citation>
    <scope>NUCLEOTIDE SEQUENCE [LARGE SCALE GENOMIC DNA]</scope>
    <source>
        <strain>ATCC 700610 / UA159</strain>
    </source>
</reference>
<reference key="2">
    <citation type="journal article" date="1997" name="Mol. Microbiol.">
        <title>Transcriptional analysis of the Streptococcus mutans hrcA, grpE and dnaK genes and regulation of expression in response to heat shock and environmental acidification.</title>
        <authorList>
            <person name="Jayaraman G.C."/>
            <person name="Penders J.E."/>
            <person name="Burne R.A."/>
        </authorList>
    </citation>
    <scope>NUCLEOTIDE SEQUENCE [GENOMIC DNA] OF 1-589</scope>
    <source>
        <strain>GS-5</strain>
    </source>
</reference>
<evidence type="ECO:0000250" key="1"/>
<evidence type="ECO:0000256" key="2">
    <source>
        <dbReference type="SAM" id="MobiDB-lite"/>
    </source>
</evidence>
<evidence type="ECO:0000305" key="3"/>
<protein>
    <recommendedName>
        <fullName>Chaperone protein DnaK</fullName>
    </recommendedName>
    <alternativeName>
        <fullName>HSP70</fullName>
    </alternativeName>
    <alternativeName>
        <fullName>Heat shock 70 kDa protein</fullName>
    </alternativeName>
    <alternativeName>
        <fullName>Heat shock protein 70</fullName>
    </alternativeName>
</protein>
<organism>
    <name type="scientific">Streptococcus mutans serotype c (strain ATCC 700610 / UA159)</name>
    <dbReference type="NCBI Taxonomy" id="210007"/>
    <lineage>
        <taxon>Bacteria</taxon>
        <taxon>Bacillati</taxon>
        <taxon>Bacillota</taxon>
        <taxon>Bacilli</taxon>
        <taxon>Lactobacillales</taxon>
        <taxon>Streptococcaceae</taxon>
        <taxon>Streptococcus</taxon>
    </lineage>
</organism>
<keyword id="KW-0067">ATP-binding</keyword>
<keyword id="KW-0143">Chaperone</keyword>
<keyword id="KW-0547">Nucleotide-binding</keyword>
<keyword id="KW-0597">Phosphoprotein</keyword>
<keyword id="KW-1185">Reference proteome</keyword>
<keyword id="KW-0346">Stress response</keyword>
<comment type="function">
    <text evidence="1">Acts as a chaperone.</text>
</comment>
<comment type="induction">
    <text>By heat shock.</text>
</comment>
<comment type="similarity">
    <text evidence="3">Belongs to the heat shock protein 70 family.</text>
</comment>
<accession>O06942</accession>
<feature type="chain" id="PRO_0000078552" description="Chaperone protein DnaK">
    <location>
        <begin position="1"/>
        <end position="612"/>
    </location>
</feature>
<feature type="region of interest" description="Disordered" evidence="2">
    <location>
        <begin position="576"/>
        <end position="612"/>
    </location>
</feature>
<feature type="compositionally biased region" description="Low complexity" evidence="2">
    <location>
        <begin position="576"/>
        <end position="594"/>
    </location>
</feature>
<feature type="compositionally biased region" description="Acidic residues" evidence="2">
    <location>
        <begin position="603"/>
        <end position="612"/>
    </location>
</feature>
<feature type="modified residue" description="Phosphothreonine; by autocatalysis" evidence="1">
    <location>
        <position position="173"/>
    </location>
</feature>
<feature type="sequence conflict" description="In Ref. 2; AAC45612." evidence="3" ref="2">
    <original>G</original>
    <variation>A</variation>
    <location>
        <position position="81"/>
    </location>
</feature>
<feature type="sequence conflict" description="In Ref. 2; AAC45612." evidence="3" ref="2">
    <original>DRNTTIPTSKSQVFSTAADNQPA</original>
    <variation>IAIQQSQLLNHKSSQQTLQITNQS</variation>
    <location>
        <begin position="383"/>
        <end position="405"/>
    </location>
</feature>
<feature type="sequence conflict" description="In Ref. 2; AAC45612." evidence="3" ref="2">
    <original>A</original>
    <variation>R</variation>
    <location>
        <position position="577"/>
    </location>
</feature>
<dbReference type="EMBL" id="AE014133">
    <property type="protein sequence ID" value="AAN57867.1"/>
    <property type="molecule type" value="Genomic_DNA"/>
</dbReference>
<dbReference type="EMBL" id="U78296">
    <property type="protein sequence ID" value="AAC45612.1"/>
    <property type="molecule type" value="Genomic_DNA"/>
</dbReference>
<dbReference type="RefSeq" id="NP_720561.1">
    <property type="nucleotide sequence ID" value="NC_004350.2"/>
</dbReference>
<dbReference type="RefSeq" id="WP_002263417.1">
    <property type="nucleotide sequence ID" value="NC_004350.2"/>
</dbReference>
<dbReference type="SMR" id="O06942"/>
<dbReference type="STRING" id="210007.SMU_82"/>
<dbReference type="KEGG" id="smu:SMU_82"/>
<dbReference type="PATRIC" id="fig|210007.7.peg.71"/>
<dbReference type="eggNOG" id="COG0443">
    <property type="taxonomic scope" value="Bacteria"/>
</dbReference>
<dbReference type="HOGENOM" id="CLU_005965_2_3_9"/>
<dbReference type="OrthoDB" id="9766019at2"/>
<dbReference type="PhylomeDB" id="O06942"/>
<dbReference type="Proteomes" id="UP000002512">
    <property type="component" value="Chromosome"/>
</dbReference>
<dbReference type="GO" id="GO:0005524">
    <property type="term" value="F:ATP binding"/>
    <property type="evidence" value="ECO:0007669"/>
    <property type="project" value="UniProtKB-UniRule"/>
</dbReference>
<dbReference type="GO" id="GO:0140662">
    <property type="term" value="F:ATP-dependent protein folding chaperone"/>
    <property type="evidence" value="ECO:0007669"/>
    <property type="project" value="InterPro"/>
</dbReference>
<dbReference type="GO" id="GO:0051082">
    <property type="term" value="F:unfolded protein binding"/>
    <property type="evidence" value="ECO:0007669"/>
    <property type="project" value="InterPro"/>
</dbReference>
<dbReference type="CDD" id="cd10234">
    <property type="entry name" value="ASKHA_NBD_HSP70_DnaK-like"/>
    <property type="match status" value="1"/>
</dbReference>
<dbReference type="FunFam" id="2.60.34.10:FF:000014">
    <property type="entry name" value="Chaperone protein DnaK HSP70"/>
    <property type="match status" value="1"/>
</dbReference>
<dbReference type="FunFam" id="3.30.420.40:FF:000071">
    <property type="entry name" value="Molecular chaperone DnaK"/>
    <property type="match status" value="1"/>
</dbReference>
<dbReference type="FunFam" id="3.90.640.10:FF:000003">
    <property type="entry name" value="Molecular chaperone DnaK"/>
    <property type="match status" value="1"/>
</dbReference>
<dbReference type="Gene3D" id="1.20.1270.10">
    <property type="match status" value="1"/>
</dbReference>
<dbReference type="Gene3D" id="3.30.420.40">
    <property type="match status" value="2"/>
</dbReference>
<dbReference type="Gene3D" id="3.90.640.10">
    <property type="entry name" value="Actin, Chain A, domain 4"/>
    <property type="match status" value="1"/>
</dbReference>
<dbReference type="Gene3D" id="2.60.34.10">
    <property type="entry name" value="Substrate Binding Domain Of DNAk, Chain A, domain 1"/>
    <property type="match status" value="1"/>
</dbReference>
<dbReference type="HAMAP" id="MF_00332">
    <property type="entry name" value="DnaK"/>
    <property type="match status" value="1"/>
</dbReference>
<dbReference type="InterPro" id="IPR043129">
    <property type="entry name" value="ATPase_NBD"/>
</dbReference>
<dbReference type="InterPro" id="IPR012725">
    <property type="entry name" value="Chaperone_DnaK"/>
</dbReference>
<dbReference type="InterPro" id="IPR018181">
    <property type="entry name" value="Heat_shock_70_CS"/>
</dbReference>
<dbReference type="InterPro" id="IPR029048">
    <property type="entry name" value="HSP70_C_sf"/>
</dbReference>
<dbReference type="InterPro" id="IPR029047">
    <property type="entry name" value="HSP70_peptide-bd_sf"/>
</dbReference>
<dbReference type="InterPro" id="IPR013126">
    <property type="entry name" value="Hsp_70_fam"/>
</dbReference>
<dbReference type="NCBIfam" id="NF001413">
    <property type="entry name" value="PRK00290.1"/>
    <property type="match status" value="1"/>
</dbReference>
<dbReference type="NCBIfam" id="TIGR02350">
    <property type="entry name" value="prok_dnaK"/>
    <property type="match status" value="1"/>
</dbReference>
<dbReference type="PANTHER" id="PTHR19375">
    <property type="entry name" value="HEAT SHOCK PROTEIN 70KDA"/>
    <property type="match status" value="1"/>
</dbReference>
<dbReference type="Pfam" id="PF00012">
    <property type="entry name" value="HSP70"/>
    <property type="match status" value="1"/>
</dbReference>
<dbReference type="PRINTS" id="PR00301">
    <property type="entry name" value="HEATSHOCK70"/>
</dbReference>
<dbReference type="SUPFAM" id="SSF53067">
    <property type="entry name" value="Actin-like ATPase domain"/>
    <property type="match status" value="2"/>
</dbReference>
<dbReference type="SUPFAM" id="SSF100934">
    <property type="entry name" value="Heat shock protein 70kD (HSP70), C-terminal subdomain"/>
    <property type="match status" value="1"/>
</dbReference>
<dbReference type="SUPFAM" id="SSF100920">
    <property type="entry name" value="Heat shock protein 70kD (HSP70), peptide-binding domain"/>
    <property type="match status" value="1"/>
</dbReference>
<dbReference type="PROSITE" id="PS00297">
    <property type="entry name" value="HSP70_1"/>
    <property type="match status" value="1"/>
</dbReference>
<dbReference type="PROSITE" id="PS00329">
    <property type="entry name" value="HSP70_2"/>
    <property type="match status" value="1"/>
</dbReference>
<dbReference type="PROSITE" id="PS01036">
    <property type="entry name" value="HSP70_3"/>
    <property type="match status" value="1"/>
</dbReference>
<sequence>MSKIIGIDLGTTNSAVAVLEGTESKIIANPEGNRTTPSVVSFKNGEIIVGDAAKRQAVTNPETILSIKSKMGTSEKVSANGKEYTPQEISAMILQYLKGYAEDYLGEKVEKAVITVPAYFNDAQRQATKDAGKIAGLEVERIVNEPTAAALAYGLDKTDKDEKILVFDLGGGTFDVSILELGDGVFDVLATAGDNKLGGDNFDQKVIDWLVEEFKKENGIDLSTDKMALQRLKDAAEKAKKDLSGVTSTQISLPFITAGEAGPLHLETSLSRAKFDDLTRDLVERTKTPVRQALSDAGLSLSEIDEVILVGGSTRIPAVVDAVKAETGKEPNKSVNPDEVVAMGAAIQGGVITGDVKDVVLLDVTPLSLGIETMGGVFTKLIDRNTTIPTSKSQVFSTAADNQPAVDIHVLQGERPMAADNKTLGRFQLTDIPAAPRGVPQIEVTFDIDKNGIVSVKAKDLGTQKEQTIVIQSNSGLTDEEIDKMMKDAEANAEADAKRKEEVDLKNEVDQAIFTTEKTIKETEGKGFDTERDAAQAALDDLKKAQESGNLDDMKAKLEALNEKAQALAMKLYEQAAAAQQAQAGQEGAQSSDSDSSDKGGDDVVDGEFTEK</sequence>
<name>DNAK_STRMU</name>
<gene>
    <name type="primary">dnaK</name>
    <name type="ordered locus">SMU_82</name>
</gene>
<proteinExistence type="evidence at transcript level"/>